<protein>
    <recommendedName>
        <fullName evidence="1">DNA dC-&gt;dU-editing enzyme APOBEC-3G</fullName>
        <ecNumber evidence="1">3.5.4.38</ecNumber>
    </recommendedName>
    <alternativeName>
        <fullName>Deoxycytidine deaminase</fullName>
    </alternativeName>
</protein>
<proteinExistence type="inferred from homology"/>
<dbReference type="EC" id="3.5.4.38" evidence="1"/>
<dbReference type="EMBL" id="AY622585">
    <property type="protein sequence ID" value="AAT44398.1"/>
    <property type="molecule type" value="Genomic_DNA"/>
</dbReference>
<dbReference type="EMBL" id="AY622578">
    <property type="protein sequence ID" value="AAT44398.1"/>
    <property type="status" value="JOINED"/>
    <property type="molecule type" value="Genomic_DNA"/>
</dbReference>
<dbReference type="EMBL" id="AY622579">
    <property type="protein sequence ID" value="AAT44398.1"/>
    <property type="status" value="JOINED"/>
    <property type="molecule type" value="Genomic_DNA"/>
</dbReference>
<dbReference type="EMBL" id="AY622580">
    <property type="protein sequence ID" value="AAT44398.1"/>
    <property type="status" value="JOINED"/>
    <property type="molecule type" value="Genomic_DNA"/>
</dbReference>
<dbReference type="EMBL" id="AY622581">
    <property type="protein sequence ID" value="AAT44398.1"/>
    <property type="status" value="JOINED"/>
    <property type="molecule type" value="Genomic_DNA"/>
</dbReference>
<dbReference type="EMBL" id="AY622582">
    <property type="protein sequence ID" value="AAT44398.1"/>
    <property type="status" value="JOINED"/>
    <property type="molecule type" value="Genomic_DNA"/>
</dbReference>
<dbReference type="EMBL" id="AY622583">
    <property type="protein sequence ID" value="AAT44398.1"/>
    <property type="status" value="JOINED"/>
    <property type="molecule type" value="Genomic_DNA"/>
</dbReference>
<dbReference type="EMBL" id="AY622584">
    <property type="protein sequence ID" value="AAT44398.1"/>
    <property type="status" value="JOINED"/>
    <property type="molecule type" value="Genomic_DNA"/>
</dbReference>
<dbReference type="SMR" id="Q694B7"/>
<dbReference type="eggNOG" id="KOG4075">
    <property type="taxonomic scope" value="Eukaryota"/>
</dbReference>
<dbReference type="HOGENOM" id="CLU_047918_0_0_1"/>
<dbReference type="Proteomes" id="UP000028761">
    <property type="component" value="Unplaced"/>
</dbReference>
<dbReference type="GO" id="GO:0005737">
    <property type="term" value="C:cytoplasm"/>
    <property type="evidence" value="ECO:0000250"/>
    <property type="project" value="UniProtKB"/>
</dbReference>
<dbReference type="GO" id="GO:0005634">
    <property type="term" value="C:nucleus"/>
    <property type="evidence" value="ECO:0007669"/>
    <property type="project" value="UniProtKB-SubCell"/>
</dbReference>
<dbReference type="GO" id="GO:0000932">
    <property type="term" value="C:P-body"/>
    <property type="evidence" value="ECO:0000250"/>
    <property type="project" value="UniProtKB"/>
</dbReference>
<dbReference type="GO" id="GO:1990904">
    <property type="term" value="C:ribonucleoprotein complex"/>
    <property type="evidence" value="ECO:0000250"/>
    <property type="project" value="UniProtKB"/>
</dbReference>
<dbReference type="GO" id="GO:0004126">
    <property type="term" value="F:cytidine deaminase activity"/>
    <property type="evidence" value="ECO:0000250"/>
    <property type="project" value="UniProtKB"/>
</dbReference>
<dbReference type="GO" id="GO:0003723">
    <property type="term" value="F:RNA binding"/>
    <property type="evidence" value="ECO:0007669"/>
    <property type="project" value="TreeGrafter"/>
</dbReference>
<dbReference type="GO" id="GO:0008270">
    <property type="term" value="F:zinc ion binding"/>
    <property type="evidence" value="ECO:0007669"/>
    <property type="project" value="InterPro"/>
</dbReference>
<dbReference type="GO" id="GO:0009972">
    <property type="term" value="P:cytidine deamination"/>
    <property type="evidence" value="ECO:0000250"/>
    <property type="project" value="UniProtKB"/>
</dbReference>
<dbReference type="GO" id="GO:0016554">
    <property type="term" value="P:cytidine to uridine editing"/>
    <property type="evidence" value="ECO:0007669"/>
    <property type="project" value="TreeGrafter"/>
</dbReference>
<dbReference type="GO" id="GO:0051607">
    <property type="term" value="P:defense response to virus"/>
    <property type="evidence" value="ECO:0000250"/>
    <property type="project" value="UniProtKB"/>
</dbReference>
<dbReference type="GO" id="GO:0070383">
    <property type="term" value="P:DNA cytosine deamination"/>
    <property type="evidence" value="ECO:0007669"/>
    <property type="project" value="TreeGrafter"/>
</dbReference>
<dbReference type="GO" id="GO:0045087">
    <property type="term" value="P:innate immune response"/>
    <property type="evidence" value="ECO:0007669"/>
    <property type="project" value="UniProtKB-KW"/>
</dbReference>
<dbReference type="GO" id="GO:0045869">
    <property type="term" value="P:negative regulation of single stranded viral RNA replication via double stranded DNA intermediate"/>
    <property type="evidence" value="ECO:0007669"/>
    <property type="project" value="TreeGrafter"/>
</dbReference>
<dbReference type="GO" id="GO:0010526">
    <property type="term" value="P:transposable element silencing"/>
    <property type="evidence" value="ECO:0000250"/>
    <property type="project" value="UniProtKB"/>
</dbReference>
<dbReference type="CDD" id="cd01283">
    <property type="entry name" value="cytidine_deaminase"/>
    <property type="match status" value="2"/>
</dbReference>
<dbReference type="FunFam" id="3.40.140.10:FF:000029">
    <property type="entry name" value="DNA dC-&gt;dU-editing enzyme APOBEC-3G"/>
    <property type="match status" value="2"/>
</dbReference>
<dbReference type="Gene3D" id="3.40.140.10">
    <property type="entry name" value="Cytidine Deaminase, domain 2"/>
    <property type="match status" value="2"/>
</dbReference>
<dbReference type="InterPro" id="IPR016192">
    <property type="entry name" value="APOBEC/CMP_deaminase_Zn-bd"/>
</dbReference>
<dbReference type="InterPro" id="IPR050610">
    <property type="entry name" value="APOBEC_Cyt_Deaminase"/>
</dbReference>
<dbReference type="InterPro" id="IPR002125">
    <property type="entry name" value="CMP_dCMP_dom"/>
</dbReference>
<dbReference type="InterPro" id="IPR016193">
    <property type="entry name" value="Cytidine_deaminase-like"/>
</dbReference>
<dbReference type="PANTHER" id="PTHR13857:SF20">
    <property type="entry name" value="DNA DC-DU-EDITING ENZYME APOBEC-3G"/>
    <property type="match status" value="1"/>
</dbReference>
<dbReference type="PANTHER" id="PTHR13857">
    <property type="entry name" value="MRNA EDITING ENZYME"/>
    <property type="match status" value="1"/>
</dbReference>
<dbReference type="Pfam" id="PF18782">
    <property type="entry name" value="NAD2"/>
    <property type="match status" value="2"/>
</dbReference>
<dbReference type="SUPFAM" id="SSF53927">
    <property type="entry name" value="Cytidine deaminase-like"/>
    <property type="match status" value="2"/>
</dbReference>
<dbReference type="PROSITE" id="PS00903">
    <property type="entry name" value="CYT_DCMP_DEAMINASES_1"/>
    <property type="match status" value="1"/>
</dbReference>
<dbReference type="PROSITE" id="PS51747">
    <property type="entry name" value="CYT_DCMP_DEAMINASES_2"/>
    <property type="match status" value="2"/>
</dbReference>
<feature type="chain" id="PRO_0000171768" description="DNA dC-&gt;dU-editing enzyme APOBEC-3G">
    <location>
        <begin position="1"/>
        <end position="383"/>
    </location>
</feature>
<feature type="domain" description="CMP/dCMP-type deaminase 1" evidence="2">
    <location>
        <begin position="29"/>
        <end position="138"/>
    </location>
</feature>
<feature type="domain" description="CMP/dCMP-type deaminase 2" evidence="2">
    <location>
        <begin position="214"/>
        <end position="327"/>
    </location>
</feature>
<feature type="region of interest" description="Essential for cytoplasmic localization" evidence="3">
    <location>
        <begin position="1"/>
        <end position="60"/>
    </location>
</feature>
<feature type="region of interest" description="Necessary for homooligomerization" evidence="3">
    <location>
        <begin position="209"/>
        <end position="335"/>
    </location>
</feature>
<feature type="region of interest" description="Interaction with DNA" evidence="3">
    <location>
        <begin position="213"/>
        <end position="215"/>
    </location>
</feature>
<feature type="region of interest" description="Interaction with DNA" evidence="3">
    <location>
        <begin position="312"/>
        <end position="319"/>
    </location>
</feature>
<feature type="active site" description="Proton donor" evidence="2">
    <location>
        <position position="259"/>
    </location>
</feature>
<feature type="binding site" evidence="2">
    <location>
        <position position="65"/>
    </location>
    <ligand>
        <name>Zn(2+)</name>
        <dbReference type="ChEBI" id="CHEBI:29105"/>
        <label>1</label>
    </ligand>
</feature>
<feature type="binding site" evidence="2">
    <location>
        <position position="97"/>
    </location>
    <ligand>
        <name>Zn(2+)</name>
        <dbReference type="ChEBI" id="CHEBI:29105"/>
        <label>1</label>
    </ligand>
</feature>
<feature type="binding site" evidence="2">
    <location>
        <position position="100"/>
    </location>
    <ligand>
        <name>Zn(2+)</name>
        <dbReference type="ChEBI" id="CHEBI:29105"/>
        <label>1</label>
    </ligand>
</feature>
<feature type="binding site" evidence="1">
    <location>
        <position position="257"/>
    </location>
    <ligand>
        <name>Zn(2+)</name>
        <dbReference type="ChEBI" id="CHEBI:29105"/>
        <label>2</label>
        <note>catalytic</note>
    </ligand>
</feature>
<feature type="binding site" evidence="1">
    <location>
        <position position="287"/>
    </location>
    <ligand>
        <name>Zn(2+)</name>
        <dbReference type="ChEBI" id="CHEBI:29105"/>
        <label>2</label>
        <note>catalytic</note>
    </ligand>
</feature>
<feature type="binding site" evidence="1">
    <location>
        <position position="290"/>
    </location>
    <ligand>
        <name>Zn(2+)</name>
        <dbReference type="ChEBI" id="CHEBI:29105"/>
        <label>2</label>
        <note>catalytic</note>
    </ligand>
</feature>
<feature type="site" description="Interaction with DNA" evidence="3">
    <location>
        <position position="244"/>
    </location>
</feature>
<feature type="modified residue" description="Phosphothreonine; by PKA" evidence="1">
    <location>
        <position position="32"/>
    </location>
</feature>
<feature type="modified residue" description="Phosphothreonine; by PKA and CAMK2" evidence="1">
    <location>
        <position position="218"/>
    </location>
</feature>
<reference key="1">
    <citation type="journal article" date="2004" name="PLoS Biol.">
        <title>Ancient adaptive evolution of the primate antiviral DNA-editing enzyme APOBEC3G.</title>
        <authorList>
            <person name="Sawyer S.L."/>
            <person name="Emerman M."/>
            <person name="Malik H.S."/>
        </authorList>
    </citation>
    <scope>NUCLEOTIDE SEQUENCE [GENOMIC DNA]</scope>
</reference>
<gene>
    <name type="primary">APOBEC3G</name>
</gene>
<evidence type="ECO:0000250" key="1">
    <source>
        <dbReference type="UniProtKB" id="Q9HC16"/>
    </source>
</evidence>
<evidence type="ECO:0000255" key="2">
    <source>
        <dbReference type="PROSITE-ProRule" id="PRU01083"/>
    </source>
</evidence>
<evidence type="ECO:0000305" key="3"/>
<name>ABC3G_PAPAN</name>
<organism>
    <name type="scientific">Papio anubis</name>
    <name type="common">Olive baboon</name>
    <dbReference type="NCBI Taxonomy" id="9555"/>
    <lineage>
        <taxon>Eukaryota</taxon>
        <taxon>Metazoa</taxon>
        <taxon>Chordata</taxon>
        <taxon>Craniata</taxon>
        <taxon>Vertebrata</taxon>
        <taxon>Euteleostomi</taxon>
        <taxon>Mammalia</taxon>
        <taxon>Eutheria</taxon>
        <taxon>Euarchontoglires</taxon>
        <taxon>Primates</taxon>
        <taxon>Haplorrhini</taxon>
        <taxon>Catarrhini</taxon>
        <taxon>Cercopithecidae</taxon>
        <taxon>Cercopithecinae</taxon>
        <taxon>Papio</taxon>
    </lineage>
</organism>
<comment type="function">
    <text evidence="1">DNA deaminase (cytidine deaminase) which acts as an inhibitor of retrovirus replication and retrotransposon mobility. After the penetration of retroviral nucleocapsids into target cells of infection and the initiation of reverse transcription, it can induce the conversion of cytosine to uracil in the minus-sense single-strand viral DNA, leading to G-to-A hypermutations in the subsequent plus-strand viral DNA. The resultant detrimental levels of mutations in the proviral genome, along with a deamination-independent mechanism that works prior to the proviral integration, together exert efficient antiretroviral effects in infected target cells. Selectively targets single-stranded DNA and does not deaminate double-stranded DNA or single- or double-stranded RNA (By similarity).</text>
</comment>
<comment type="catalytic activity">
    <reaction evidence="1">
        <text>a 2'-deoxycytidine in single-stranded DNA + H2O + H(+) = a 2'-deoxyuridine in single-stranded DNA + NH4(+)</text>
        <dbReference type="Rhea" id="RHEA:50948"/>
        <dbReference type="Rhea" id="RHEA-COMP:12846"/>
        <dbReference type="Rhea" id="RHEA-COMP:12847"/>
        <dbReference type="ChEBI" id="CHEBI:15377"/>
        <dbReference type="ChEBI" id="CHEBI:15378"/>
        <dbReference type="ChEBI" id="CHEBI:28938"/>
        <dbReference type="ChEBI" id="CHEBI:85452"/>
        <dbReference type="ChEBI" id="CHEBI:133902"/>
        <dbReference type="EC" id="3.5.4.38"/>
    </reaction>
</comment>
<comment type="cofactor">
    <cofactor evidence="1">
        <name>Zn(2+)</name>
        <dbReference type="ChEBI" id="CHEBI:29105"/>
    </cofactor>
</comment>
<comment type="subunit">
    <text evidence="1">Homodimer.</text>
</comment>
<comment type="subcellular location">
    <subcellularLocation>
        <location evidence="1">Cytoplasm</location>
    </subcellularLocation>
    <subcellularLocation>
        <location evidence="1">Nucleus</location>
    </subcellularLocation>
    <subcellularLocation>
        <location evidence="1">Cytoplasm</location>
        <location evidence="1">P-body</location>
    </subcellularLocation>
    <text evidence="1">Mainly cytoplasmic, small amount are found in the nucleus.</text>
</comment>
<comment type="domain">
    <text evidence="1">The CMP/dCMP deaminase domain 1 mediates RNA binding, RNA-dependent oligomerization and virion incorporation whereas the CMP/dCMP deaminase domain 2 confers deoxycytidine deaminase activity and substrate sequence specificity.</text>
</comment>
<comment type="similarity">
    <text evidence="3">Belongs to the cytidine and deoxycytidylate deaminase family.</text>
</comment>
<accession>Q694B7</accession>
<keyword id="KW-0051">Antiviral defense</keyword>
<keyword id="KW-0963">Cytoplasm</keyword>
<keyword id="KW-0378">Hydrolase</keyword>
<keyword id="KW-0391">Immunity</keyword>
<keyword id="KW-0399">Innate immunity</keyword>
<keyword id="KW-0479">Metal-binding</keyword>
<keyword id="KW-0539">Nucleus</keyword>
<keyword id="KW-0597">Phosphoprotein</keyword>
<keyword id="KW-1185">Reference proteome</keyword>
<keyword id="KW-0677">Repeat</keyword>
<keyword id="KW-0862">Zinc</keyword>
<sequence>MKPQFRNTVERMYRDTFFYNFNNRPILSRRNTVWLCYEVKTRGPSMPTWDAKIFRGQVYSKAKYHPEMRFLHWFRKWRQLHRDQEYEVTWYVSWSPCTGCANSVATFLAEDPKVTLTIFVARLYYFWKPDYQEALRVLCQKRGSPHATMKIMNYNEFQHCWNKFVRGRREPFEPWENLPKHYTLLHATLGELLRHLMDPGTFTSNFYNKPWVSGQHETYLCYKVERLHNGTWVPLNQHRGFLRNQAPDIHGFPKGRHAELCFLDLIPFWKLDGQQYRVTCFTSWSPCFSCAQEMAKFISNNEHVSLCIFAARIYDDQGRCQEGLRTLHRDGAKIAMMNYSEFEYCWDTFVDRQGRPFQPWDGLDEHSQDLSGRLRAILQNQGN</sequence>